<dbReference type="EC" id="6.1.1.4" evidence="1"/>
<dbReference type="EMBL" id="AE016823">
    <property type="protein sequence ID" value="AAS69138.1"/>
    <property type="molecule type" value="Genomic_DNA"/>
</dbReference>
<dbReference type="RefSeq" id="WP_001199946.1">
    <property type="nucleotide sequence ID" value="NC_005823.1"/>
</dbReference>
<dbReference type="SMR" id="Q72UY6"/>
<dbReference type="GeneID" id="61143872"/>
<dbReference type="KEGG" id="lic:LIC_10517"/>
<dbReference type="HOGENOM" id="CLU_004427_0_0_12"/>
<dbReference type="Proteomes" id="UP000007037">
    <property type="component" value="Chromosome I"/>
</dbReference>
<dbReference type="GO" id="GO:0005829">
    <property type="term" value="C:cytosol"/>
    <property type="evidence" value="ECO:0007669"/>
    <property type="project" value="TreeGrafter"/>
</dbReference>
<dbReference type="GO" id="GO:0002161">
    <property type="term" value="F:aminoacyl-tRNA deacylase activity"/>
    <property type="evidence" value="ECO:0007669"/>
    <property type="project" value="InterPro"/>
</dbReference>
<dbReference type="GO" id="GO:0005524">
    <property type="term" value="F:ATP binding"/>
    <property type="evidence" value="ECO:0007669"/>
    <property type="project" value="UniProtKB-UniRule"/>
</dbReference>
<dbReference type="GO" id="GO:0004823">
    <property type="term" value="F:leucine-tRNA ligase activity"/>
    <property type="evidence" value="ECO:0007669"/>
    <property type="project" value="UniProtKB-UniRule"/>
</dbReference>
<dbReference type="GO" id="GO:0006429">
    <property type="term" value="P:leucyl-tRNA aminoacylation"/>
    <property type="evidence" value="ECO:0007669"/>
    <property type="project" value="UniProtKB-UniRule"/>
</dbReference>
<dbReference type="CDD" id="cd07958">
    <property type="entry name" value="Anticodon_Ia_Leu_BEm"/>
    <property type="match status" value="1"/>
</dbReference>
<dbReference type="CDD" id="cd00812">
    <property type="entry name" value="LeuRS_core"/>
    <property type="match status" value="1"/>
</dbReference>
<dbReference type="FunFam" id="1.10.730.10:FF:000012">
    <property type="entry name" value="Leucine--tRNA ligase"/>
    <property type="match status" value="1"/>
</dbReference>
<dbReference type="FunFam" id="3.10.20.590:FF:000001">
    <property type="entry name" value="Leucine--tRNA ligase"/>
    <property type="match status" value="1"/>
</dbReference>
<dbReference type="FunFam" id="3.40.50.620:FF:000056">
    <property type="entry name" value="Leucine--tRNA ligase"/>
    <property type="match status" value="1"/>
</dbReference>
<dbReference type="FunFam" id="3.40.50.620:FF:000060">
    <property type="entry name" value="Leucine--tRNA ligase"/>
    <property type="match status" value="1"/>
</dbReference>
<dbReference type="FunFam" id="1.10.730.10:FF:000011">
    <property type="entry name" value="Leucine--tRNA ligase chloroplastic/mitochondrial"/>
    <property type="match status" value="1"/>
</dbReference>
<dbReference type="Gene3D" id="3.10.20.590">
    <property type="match status" value="1"/>
</dbReference>
<dbReference type="Gene3D" id="3.40.50.620">
    <property type="entry name" value="HUPs"/>
    <property type="match status" value="3"/>
</dbReference>
<dbReference type="Gene3D" id="1.10.730.10">
    <property type="entry name" value="Isoleucyl-tRNA Synthetase, Domain 1"/>
    <property type="match status" value="1"/>
</dbReference>
<dbReference type="HAMAP" id="MF_00049_B">
    <property type="entry name" value="Leu_tRNA_synth_B"/>
    <property type="match status" value="1"/>
</dbReference>
<dbReference type="InterPro" id="IPR001412">
    <property type="entry name" value="aa-tRNA-synth_I_CS"/>
</dbReference>
<dbReference type="InterPro" id="IPR002300">
    <property type="entry name" value="aa-tRNA-synth_Ia"/>
</dbReference>
<dbReference type="InterPro" id="IPR002302">
    <property type="entry name" value="Leu-tRNA-ligase"/>
</dbReference>
<dbReference type="InterPro" id="IPR025709">
    <property type="entry name" value="Leu_tRNA-synth_edit"/>
</dbReference>
<dbReference type="InterPro" id="IPR013155">
    <property type="entry name" value="M/V/L/I-tRNA-synth_anticd-bd"/>
</dbReference>
<dbReference type="InterPro" id="IPR014729">
    <property type="entry name" value="Rossmann-like_a/b/a_fold"/>
</dbReference>
<dbReference type="InterPro" id="IPR009080">
    <property type="entry name" value="tRNAsynth_Ia_anticodon-bd"/>
</dbReference>
<dbReference type="InterPro" id="IPR009008">
    <property type="entry name" value="Val/Leu/Ile-tRNA-synth_edit"/>
</dbReference>
<dbReference type="NCBIfam" id="TIGR00396">
    <property type="entry name" value="leuS_bact"/>
    <property type="match status" value="1"/>
</dbReference>
<dbReference type="PANTHER" id="PTHR43740:SF2">
    <property type="entry name" value="LEUCINE--TRNA LIGASE, MITOCHONDRIAL"/>
    <property type="match status" value="1"/>
</dbReference>
<dbReference type="PANTHER" id="PTHR43740">
    <property type="entry name" value="LEUCYL-TRNA SYNTHETASE"/>
    <property type="match status" value="1"/>
</dbReference>
<dbReference type="Pfam" id="PF08264">
    <property type="entry name" value="Anticodon_1"/>
    <property type="match status" value="1"/>
</dbReference>
<dbReference type="Pfam" id="PF00133">
    <property type="entry name" value="tRNA-synt_1"/>
    <property type="match status" value="2"/>
</dbReference>
<dbReference type="Pfam" id="PF13603">
    <property type="entry name" value="tRNA-synt_1_2"/>
    <property type="match status" value="1"/>
</dbReference>
<dbReference type="PRINTS" id="PR00985">
    <property type="entry name" value="TRNASYNTHLEU"/>
</dbReference>
<dbReference type="SUPFAM" id="SSF47323">
    <property type="entry name" value="Anticodon-binding domain of a subclass of class I aminoacyl-tRNA synthetases"/>
    <property type="match status" value="1"/>
</dbReference>
<dbReference type="SUPFAM" id="SSF52374">
    <property type="entry name" value="Nucleotidylyl transferase"/>
    <property type="match status" value="1"/>
</dbReference>
<dbReference type="SUPFAM" id="SSF50677">
    <property type="entry name" value="ValRS/IleRS/LeuRS editing domain"/>
    <property type="match status" value="1"/>
</dbReference>
<dbReference type="PROSITE" id="PS00178">
    <property type="entry name" value="AA_TRNA_LIGASE_I"/>
    <property type="match status" value="1"/>
</dbReference>
<evidence type="ECO:0000255" key="1">
    <source>
        <dbReference type="HAMAP-Rule" id="MF_00049"/>
    </source>
</evidence>
<comment type="catalytic activity">
    <reaction evidence="1">
        <text>tRNA(Leu) + L-leucine + ATP = L-leucyl-tRNA(Leu) + AMP + diphosphate</text>
        <dbReference type="Rhea" id="RHEA:11688"/>
        <dbReference type="Rhea" id="RHEA-COMP:9613"/>
        <dbReference type="Rhea" id="RHEA-COMP:9622"/>
        <dbReference type="ChEBI" id="CHEBI:30616"/>
        <dbReference type="ChEBI" id="CHEBI:33019"/>
        <dbReference type="ChEBI" id="CHEBI:57427"/>
        <dbReference type="ChEBI" id="CHEBI:78442"/>
        <dbReference type="ChEBI" id="CHEBI:78494"/>
        <dbReference type="ChEBI" id="CHEBI:456215"/>
        <dbReference type="EC" id="6.1.1.4"/>
    </reaction>
</comment>
<comment type="subcellular location">
    <subcellularLocation>
        <location evidence="1">Cytoplasm</location>
    </subcellularLocation>
</comment>
<comment type="similarity">
    <text evidence="1">Belongs to the class-I aminoacyl-tRNA synthetase family.</text>
</comment>
<feature type="chain" id="PRO_0000152035" description="Leucine--tRNA ligase">
    <location>
        <begin position="1"/>
        <end position="863"/>
    </location>
</feature>
<feature type="short sequence motif" description="'HIGH' region">
    <location>
        <begin position="40"/>
        <end position="51"/>
    </location>
</feature>
<feature type="short sequence motif" description="'KMSKS' region">
    <location>
        <begin position="635"/>
        <end position="639"/>
    </location>
</feature>
<feature type="binding site" evidence="1">
    <location>
        <position position="638"/>
    </location>
    <ligand>
        <name>ATP</name>
        <dbReference type="ChEBI" id="CHEBI:30616"/>
    </ligand>
</feature>
<name>SYL_LEPIC</name>
<organism>
    <name type="scientific">Leptospira interrogans serogroup Icterohaemorrhagiae serovar copenhageni (strain Fiocruz L1-130)</name>
    <dbReference type="NCBI Taxonomy" id="267671"/>
    <lineage>
        <taxon>Bacteria</taxon>
        <taxon>Pseudomonadati</taxon>
        <taxon>Spirochaetota</taxon>
        <taxon>Spirochaetia</taxon>
        <taxon>Leptospirales</taxon>
        <taxon>Leptospiraceae</taxon>
        <taxon>Leptospira</taxon>
    </lineage>
</organism>
<reference key="1">
    <citation type="journal article" date="2004" name="J. Bacteriol.">
        <title>Comparative genomics of two Leptospira interrogans serovars reveals novel insights into physiology and pathogenesis.</title>
        <authorList>
            <person name="Nascimento A.L.T.O."/>
            <person name="Ko A.I."/>
            <person name="Martins E.A.L."/>
            <person name="Monteiro-Vitorello C.B."/>
            <person name="Ho P.L."/>
            <person name="Haake D.A."/>
            <person name="Verjovski-Almeida S."/>
            <person name="Hartskeerl R.A."/>
            <person name="Marques M.V."/>
            <person name="Oliveira M.C."/>
            <person name="Menck C.F.M."/>
            <person name="Leite L.C.C."/>
            <person name="Carrer H."/>
            <person name="Coutinho L.L."/>
            <person name="Degrave W.M."/>
            <person name="Dellagostin O.A."/>
            <person name="El-Dorry H."/>
            <person name="Ferro E.S."/>
            <person name="Ferro M.I.T."/>
            <person name="Furlan L.R."/>
            <person name="Gamberini M."/>
            <person name="Giglioti E.A."/>
            <person name="Goes-Neto A."/>
            <person name="Goldman G.H."/>
            <person name="Goldman M.H.S."/>
            <person name="Harakava R."/>
            <person name="Jeronimo S.M.B."/>
            <person name="Junqueira-de-Azevedo I.L.M."/>
            <person name="Kimura E.T."/>
            <person name="Kuramae E.E."/>
            <person name="Lemos E.G.M."/>
            <person name="Lemos M.V.F."/>
            <person name="Marino C.L."/>
            <person name="Nunes L.R."/>
            <person name="de Oliveira R.C."/>
            <person name="Pereira G.G."/>
            <person name="Reis M.S."/>
            <person name="Schriefer A."/>
            <person name="Siqueira W.J."/>
            <person name="Sommer P."/>
            <person name="Tsai S.M."/>
            <person name="Simpson A.J.G."/>
            <person name="Ferro J.A."/>
            <person name="Camargo L.E.A."/>
            <person name="Kitajima J.P."/>
            <person name="Setubal J.C."/>
            <person name="Van Sluys M.A."/>
        </authorList>
    </citation>
    <scope>NUCLEOTIDE SEQUENCE [LARGE SCALE GENOMIC DNA]</scope>
    <source>
        <strain>Fiocruz L1-130</strain>
    </source>
</reference>
<protein>
    <recommendedName>
        <fullName evidence="1">Leucine--tRNA ligase</fullName>
        <ecNumber evidence="1">6.1.1.4</ecNumber>
    </recommendedName>
    <alternativeName>
        <fullName evidence="1">Leucyl-tRNA synthetase</fullName>
        <shortName evidence="1">LeuRS</shortName>
    </alternativeName>
</protein>
<keyword id="KW-0030">Aminoacyl-tRNA synthetase</keyword>
<keyword id="KW-0067">ATP-binding</keyword>
<keyword id="KW-0963">Cytoplasm</keyword>
<keyword id="KW-0436">Ligase</keyword>
<keyword id="KW-0547">Nucleotide-binding</keyword>
<keyword id="KW-0648">Protein biosynthesis</keyword>
<sequence>MQYPFQEVESFWQKFWEEHKSFQTNIRSSKPKFYCLDMFPYPSGAGLHVGHPEGYTATDILSRFKRMKGFEVLHPMGWDAFGLPAERYAMQTGIHPAITTKDNIDNFRRQIQMIGLSYDWSRELSTTDPDYYKFTQWIFIQLYQSWFNPELKKAESINELIRRFSNQGSNGLDYRQFNSEEWKNFSPVEKEKILSDFRLVYQAEIPVNWCEALGTVLANEEVEEWVGKGYEVVRKPMRQYMMRITAYADRLLEDLELVEWPPSTLEMQKNWIGKSEGLEITFPFLKPLQSGLEGIRIFTTRPDTIFGVTYMVVAPEHPIVSEITTPEQKQKVEEYQKTSSLKSDLDRMELNKEKTGVFTGTFVFNPADPSQKIPVWISDYVLYGYGTGAIMAVPAHDQRDFEFARTFGLKIIPVIEGEISEAAFDSKTSTCINSSSSEISINGLDYTSASSKIISWAESKKIGRKKIQFKLRDWLFARQRYWGEPIPLVHYPSGVTKPIPESELPLVLPNLEEFKPSGTGESPLALAKDWLQYKDPSTGEIGTRETNTMPQWAGSCWYYLRYIDPKNGRFLCDPELEKKWMPVNLYVGGSEHAVLHLLYSRFWHKFLFDIGAVSTKEPFDKLIHQGLILGEDKRKMSKSLGNVVNPDDVIKEYGADSLRLFEMFMGPLEMVKPWSTRGVEGVFRFLNRIWRLFHSGSQESFRLDDVEPTPEELKILHKTIQKVNEDIPNFSFNTAIAQLMIFVNEFTPSDRRPKKVLESFILLLAPFAPHIAEELWKRSGKMESLSYEKFPEADPQYLVESEILIVVQVNGKLRDEFKAPKDVSQSDAISMAKNLDKIKGILEGKTIRKEIYVPGKLVNLVIG</sequence>
<gene>
    <name evidence="1" type="primary">leuS</name>
    <name type="ordered locus">LIC_10517</name>
</gene>
<accession>Q72UY6</accession>
<proteinExistence type="inferred from homology"/>